<sequence>MKFFTDLLPVLLFFGAYWLTRDMFVATGVAIAATAVMVAWAWFKHRKVDTMQWISLGLIVVLGGATLLLHDKHFIMWKPTVLYWVMGAGLLISEFAGKNGLRLMMGKQIEMPDPVWRKLTWAWSGFFAFMGALNLFVAYHFSEDVWVNFKLFGGMGLMLLFVIAQSLFLAKYIEEKK</sequence>
<keyword id="KW-0997">Cell inner membrane</keyword>
<keyword id="KW-1003">Cell membrane</keyword>
<keyword id="KW-0472">Membrane</keyword>
<keyword id="KW-1185">Reference proteome</keyword>
<keyword id="KW-0812">Transmembrane</keyword>
<keyword id="KW-1133">Transmembrane helix</keyword>
<reference key="1">
    <citation type="journal article" date="2003" name="Proc. Natl. Acad. Sci. U.S.A.">
        <title>The complete genome sequence of Chromobacterium violaceum reveals remarkable and exploitable bacterial adaptability.</title>
        <authorList>
            <person name="Vasconcelos A.T.R."/>
            <person name="de Almeida D.F."/>
            <person name="Hungria M."/>
            <person name="Guimaraes C.T."/>
            <person name="Antonio R.V."/>
            <person name="Almeida F.C."/>
            <person name="de Almeida L.G.P."/>
            <person name="de Almeida R."/>
            <person name="Alves-Gomes J.A."/>
            <person name="Andrade E.M."/>
            <person name="Araripe J."/>
            <person name="de Araujo M.F.F."/>
            <person name="Astolfi-Filho S."/>
            <person name="Azevedo V."/>
            <person name="Baptista A.J."/>
            <person name="Bataus L.A.M."/>
            <person name="Batista J.S."/>
            <person name="Belo A."/>
            <person name="van den Berg C."/>
            <person name="Bogo M."/>
            <person name="Bonatto S."/>
            <person name="Bordignon J."/>
            <person name="Brigido M.M."/>
            <person name="Brito C.A."/>
            <person name="Brocchi M."/>
            <person name="Burity H.A."/>
            <person name="Camargo A.A."/>
            <person name="Cardoso D.D.P."/>
            <person name="Carneiro N.P."/>
            <person name="Carraro D.M."/>
            <person name="Carvalho C.M.B."/>
            <person name="Cascardo J.C.M."/>
            <person name="Cavada B.S."/>
            <person name="Chueire L.M.O."/>
            <person name="Creczynski-Pasa T.B."/>
            <person name="Cunha-Junior N.C."/>
            <person name="Fagundes N."/>
            <person name="Falcao C.L."/>
            <person name="Fantinatti F."/>
            <person name="Farias I.P."/>
            <person name="Felipe M.S.S."/>
            <person name="Ferrari L.P."/>
            <person name="Ferro J.A."/>
            <person name="Ferro M.I.T."/>
            <person name="Franco G.R."/>
            <person name="Freitas N.S.A."/>
            <person name="Furlan L.R."/>
            <person name="Gazzinelli R.T."/>
            <person name="Gomes E.A."/>
            <person name="Goncalves P.R."/>
            <person name="Grangeiro T.B."/>
            <person name="Grattapaglia D."/>
            <person name="Grisard E.C."/>
            <person name="Hanna E.S."/>
            <person name="Jardim S.N."/>
            <person name="Laurino J."/>
            <person name="Leoi L.C.T."/>
            <person name="Lima L.F.A."/>
            <person name="Loureiro M.F."/>
            <person name="Lyra M.C.C.P."/>
            <person name="Madeira H.M.F."/>
            <person name="Manfio G.P."/>
            <person name="Maranhao A.Q."/>
            <person name="Martins W.S."/>
            <person name="di Mauro S.M.Z."/>
            <person name="de Medeiros S.R.B."/>
            <person name="Meissner R.V."/>
            <person name="Moreira M.A.M."/>
            <person name="Nascimento F.F."/>
            <person name="Nicolas M.F."/>
            <person name="Oliveira J.G."/>
            <person name="Oliveira S.C."/>
            <person name="Paixao R.F.C."/>
            <person name="Parente J.A."/>
            <person name="Pedrosa F.O."/>
            <person name="Pena S.D.J."/>
            <person name="Pereira J.O."/>
            <person name="Pereira M."/>
            <person name="Pinto L.S.R.C."/>
            <person name="Pinto L.S."/>
            <person name="Porto J.I.R."/>
            <person name="Potrich D.P."/>
            <person name="Ramalho-Neto C.E."/>
            <person name="Reis A.M.M."/>
            <person name="Rigo L.U."/>
            <person name="Rondinelli E."/>
            <person name="Santos E.B.P."/>
            <person name="Santos F.R."/>
            <person name="Schneider M.P.C."/>
            <person name="Seuanez H.N."/>
            <person name="Silva A.M.R."/>
            <person name="da Silva A.L.C."/>
            <person name="Silva D.W."/>
            <person name="Silva R."/>
            <person name="Simoes I.C."/>
            <person name="Simon D."/>
            <person name="Soares C.M.A."/>
            <person name="Soares R.B.A."/>
            <person name="Souza E.M."/>
            <person name="Souza K.R.L."/>
            <person name="Souza R.C."/>
            <person name="Steffens M.B.R."/>
            <person name="Steindel M."/>
            <person name="Teixeira S.R."/>
            <person name="Urmenyi T."/>
            <person name="Vettore A."/>
            <person name="Wassem R."/>
            <person name="Zaha A."/>
            <person name="Simpson A.J.G."/>
        </authorList>
    </citation>
    <scope>NUCLEOTIDE SEQUENCE [LARGE SCALE GENOMIC DNA]</scope>
    <source>
        <strain>ATCC 12472 / DSM 30191 / JCM 1249 / CCUG 213 / NBRC 12614 / NCIMB 9131 / NCTC 9757 / MK</strain>
    </source>
</reference>
<comment type="function">
    <text evidence="1">Plays a role in cell envelope biogenesis, maintenance of cell envelope integrity and membrane homeostasis.</text>
</comment>
<comment type="subcellular location">
    <subcellularLocation>
        <location evidence="1">Cell inner membrane</location>
        <topology evidence="1">Multi-pass membrane protein</topology>
    </subcellularLocation>
</comment>
<comment type="similarity">
    <text evidence="1">Belongs to the YciB family.</text>
</comment>
<evidence type="ECO:0000255" key="1">
    <source>
        <dbReference type="HAMAP-Rule" id="MF_00189"/>
    </source>
</evidence>
<feature type="chain" id="PRO_1000021004" description="Inner membrane-spanning protein YciB">
    <location>
        <begin position="1"/>
        <end position="177"/>
    </location>
</feature>
<feature type="transmembrane region" description="Helical" evidence="1">
    <location>
        <begin position="23"/>
        <end position="43"/>
    </location>
</feature>
<feature type="transmembrane region" description="Helical" evidence="1">
    <location>
        <begin position="50"/>
        <end position="70"/>
    </location>
</feature>
<feature type="transmembrane region" description="Helical" evidence="1">
    <location>
        <begin position="73"/>
        <end position="93"/>
    </location>
</feature>
<feature type="transmembrane region" description="Helical" evidence="1">
    <location>
        <begin position="119"/>
        <end position="139"/>
    </location>
</feature>
<feature type="transmembrane region" description="Helical" evidence="1">
    <location>
        <begin position="149"/>
        <end position="169"/>
    </location>
</feature>
<name>YCIB_CHRVO</name>
<proteinExistence type="inferred from homology"/>
<organism>
    <name type="scientific">Chromobacterium violaceum (strain ATCC 12472 / DSM 30191 / JCM 1249 / CCUG 213 / NBRC 12614 / NCIMB 9131 / NCTC 9757 / MK)</name>
    <dbReference type="NCBI Taxonomy" id="243365"/>
    <lineage>
        <taxon>Bacteria</taxon>
        <taxon>Pseudomonadati</taxon>
        <taxon>Pseudomonadota</taxon>
        <taxon>Betaproteobacteria</taxon>
        <taxon>Neisseriales</taxon>
        <taxon>Chromobacteriaceae</taxon>
        <taxon>Chromobacterium</taxon>
    </lineage>
</organism>
<accession>Q7NTX4</accession>
<dbReference type="EMBL" id="AE016825">
    <property type="protein sequence ID" value="AAQ60597.1"/>
    <property type="molecule type" value="Genomic_DNA"/>
</dbReference>
<dbReference type="RefSeq" id="WP_011136476.1">
    <property type="nucleotide sequence ID" value="NC_005085.1"/>
</dbReference>
<dbReference type="STRING" id="243365.CV_2929"/>
<dbReference type="GeneID" id="66368629"/>
<dbReference type="KEGG" id="cvi:CV_2929"/>
<dbReference type="eggNOG" id="COG2917">
    <property type="taxonomic scope" value="Bacteria"/>
</dbReference>
<dbReference type="HOGENOM" id="CLU_089554_2_0_4"/>
<dbReference type="OrthoDB" id="9788219at2"/>
<dbReference type="Proteomes" id="UP000001424">
    <property type="component" value="Chromosome"/>
</dbReference>
<dbReference type="GO" id="GO:0005886">
    <property type="term" value="C:plasma membrane"/>
    <property type="evidence" value="ECO:0007669"/>
    <property type="project" value="UniProtKB-SubCell"/>
</dbReference>
<dbReference type="HAMAP" id="MF_00189">
    <property type="entry name" value="YciB"/>
    <property type="match status" value="1"/>
</dbReference>
<dbReference type="InterPro" id="IPR006008">
    <property type="entry name" value="YciB"/>
</dbReference>
<dbReference type="NCBIfam" id="TIGR00997">
    <property type="entry name" value="ispZ"/>
    <property type="match status" value="1"/>
</dbReference>
<dbReference type="NCBIfam" id="NF001325">
    <property type="entry name" value="PRK00259.1-3"/>
    <property type="match status" value="1"/>
</dbReference>
<dbReference type="PANTHER" id="PTHR36917:SF1">
    <property type="entry name" value="INNER MEMBRANE-SPANNING PROTEIN YCIB"/>
    <property type="match status" value="1"/>
</dbReference>
<dbReference type="PANTHER" id="PTHR36917">
    <property type="entry name" value="INTRACELLULAR SEPTATION PROTEIN A-RELATED"/>
    <property type="match status" value="1"/>
</dbReference>
<dbReference type="Pfam" id="PF04279">
    <property type="entry name" value="IspA"/>
    <property type="match status" value="1"/>
</dbReference>
<protein>
    <recommendedName>
        <fullName evidence="1">Inner membrane-spanning protein YciB</fullName>
    </recommendedName>
</protein>
<gene>
    <name evidence="1" type="primary">yciB</name>
    <name type="ordered locus">CV_2929</name>
</gene>